<comment type="function">
    <text evidence="1">Catalyzes the formation of acetyl phosphate from acetate and ATP. Can also catalyze the reverse reaction.</text>
</comment>
<comment type="catalytic activity">
    <reaction evidence="1">
        <text>acetate + ATP = acetyl phosphate + ADP</text>
        <dbReference type="Rhea" id="RHEA:11352"/>
        <dbReference type="ChEBI" id="CHEBI:22191"/>
        <dbReference type="ChEBI" id="CHEBI:30089"/>
        <dbReference type="ChEBI" id="CHEBI:30616"/>
        <dbReference type="ChEBI" id="CHEBI:456216"/>
        <dbReference type="EC" id="2.7.2.1"/>
    </reaction>
</comment>
<comment type="cofactor">
    <cofactor evidence="1">
        <name>Mg(2+)</name>
        <dbReference type="ChEBI" id="CHEBI:18420"/>
    </cofactor>
    <cofactor evidence="1">
        <name>Mn(2+)</name>
        <dbReference type="ChEBI" id="CHEBI:29035"/>
    </cofactor>
    <text evidence="1">Mg(2+). Can also accept Mn(2+).</text>
</comment>
<comment type="pathway">
    <text evidence="1">Metabolic intermediate biosynthesis; acetyl-CoA biosynthesis; acetyl-CoA from acetate: step 1/2.</text>
</comment>
<comment type="subunit">
    <text evidence="1">Homodimer.</text>
</comment>
<comment type="subcellular location">
    <subcellularLocation>
        <location evidence="1">Cytoplasm</location>
    </subcellularLocation>
</comment>
<comment type="similarity">
    <text evidence="1">Belongs to the acetokinase family.</text>
</comment>
<sequence length="403" mass="44913">MKVLVINSGSSSIKYQLIEMDGEKVLCKGIAERIGIEGSRLVHRVNDEKYVIERELPDHEEALKLILNTLVDEKLGVIKDLKEIDAVGHRVVHGGERFKESVLVDEEVLKAIEEVSPLAPLHNPANLMGIKAAMKLLPGVPNVVVFDTAFHQTIPQKAYLYAIPYEYYEKHRIRRYGFHGTSHRYVSKRAAEILGKKLEELKIITCHIGNGASVAAVKYGKCVDTSMGFTPLEGLVMGTRSGDLDPAIPFFIMEKEGISPQEMYDILNKKSGVYGLSKGFSSDMRDIEEAALKGDEWCKLILDIYHYRIAKYIGAYAAAMNGVDAIVFTAGVGENSPITREDVCSYLEFLGVKLDKQKNEETIRGKEGIISTLDSRVKVLVVPTNEELMIARDTKEIVEKIGR</sequence>
<dbReference type="EC" id="2.7.2.1" evidence="1"/>
<dbReference type="EMBL" id="CP000702">
    <property type="protein sequence ID" value="ABQ46670.1"/>
    <property type="molecule type" value="Genomic_DNA"/>
</dbReference>
<dbReference type="RefSeq" id="WP_011943260.1">
    <property type="nucleotide sequence ID" value="NC_009486.1"/>
</dbReference>
<dbReference type="SMR" id="A5IKE7"/>
<dbReference type="STRING" id="390874.Tpet_0650"/>
<dbReference type="KEGG" id="tpt:Tpet_0650"/>
<dbReference type="eggNOG" id="COG0282">
    <property type="taxonomic scope" value="Bacteria"/>
</dbReference>
<dbReference type="HOGENOM" id="CLU_020352_0_1_0"/>
<dbReference type="UniPathway" id="UPA00340">
    <property type="reaction ID" value="UER00458"/>
</dbReference>
<dbReference type="Proteomes" id="UP000006558">
    <property type="component" value="Chromosome"/>
</dbReference>
<dbReference type="GO" id="GO:0005737">
    <property type="term" value="C:cytoplasm"/>
    <property type="evidence" value="ECO:0007669"/>
    <property type="project" value="UniProtKB-SubCell"/>
</dbReference>
<dbReference type="GO" id="GO:0008776">
    <property type="term" value="F:acetate kinase activity"/>
    <property type="evidence" value="ECO:0007669"/>
    <property type="project" value="UniProtKB-UniRule"/>
</dbReference>
<dbReference type="GO" id="GO:0005524">
    <property type="term" value="F:ATP binding"/>
    <property type="evidence" value="ECO:0007669"/>
    <property type="project" value="UniProtKB-KW"/>
</dbReference>
<dbReference type="GO" id="GO:0000287">
    <property type="term" value="F:magnesium ion binding"/>
    <property type="evidence" value="ECO:0007669"/>
    <property type="project" value="UniProtKB-UniRule"/>
</dbReference>
<dbReference type="GO" id="GO:0006083">
    <property type="term" value="P:acetate metabolic process"/>
    <property type="evidence" value="ECO:0007669"/>
    <property type="project" value="TreeGrafter"/>
</dbReference>
<dbReference type="GO" id="GO:0006085">
    <property type="term" value="P:acetyl-CoA biosynthetic process"/>
    <property type="evidence" value="ECO:0007669"/>
    <property type="project" value="UniProtKB-UniRule"/>
</dbReference>
<dbReference type="CDD" id="cd24010">
    <property type="entry name" value="ASKHA_NBD_AcK_PK"/>
    <property type="match status" value="1"/>
</dbReference>
<dbReference type="Gene3D" id="3.30.420.40">
    <property type="match status" value="2"/>
</dbReference>
<dbReference type="HAMAP" id="MF_00020">
    <property type="entry name" value="Acetate_kinase"/>
    <property type="match status" value="1"/>
</dbReference>
<dbReference type="InterPro" id="IPR004372">
    <property type="entry name" value="Ac/propionate_kinase"/>
</dbReference>
<dbReference type="InterPro" id="IPR000890">
    <property type="entry name" value="Aliphatic_acid_kin_short-chain"/>
</dbReference>
<dbReference type="InterPro" id="IPR023865">
    <property type="entry name" value="Aliphatic_acid_kinase_CS"/>
</dbReference>
<dbReference type="InterPro" id="IPR043129">
    <property type="entry name" value="ATPase_NBD"/>
</dbReference>
<dbReference type="NCBIfam" id="TIGR00016">
    <property type="entry name" value="ackA"/>
    <property type="match status" value="1"/>
</dbReference>
<dbReference type="PANTHER" id="PTHR21060">
    <property type="entry name" value="ACETATE KINASE"/>
    <property type="match status" value="1"/>
</dbReference>
<dbReference type="PANTHER" id="PTHR21060:SF15">
    <property type="entry name" value="ACETATE KINASE-RELATED"/>
    <property type="match status" value="1"/>
</dbReference>
<dbReference type="Pfam" id="PF00871">
    <property type="entry name" value="Acetate_kinase"/>
    <property type="match status" value="1"/>
</dbReference>
<dbReference type="PIRSF" id="PIRSF000722">
    <property type="entry name" value="Acetate_prop_kin"/>
    <property type="match status" value="1"/>
</dbReference>
<dbReference type="PRINTS" id="PR00471">
    <property type="entry name" value="ACETATEKNASE"/>
</dbReference>
<dbReference type="SUPFAM" id="SSF53067">
    <property type="entry name" value="Actin-like ATPase domain"/>
    <property type="match status" value="2"/>
</dbReference>
<dbReference type="PROSITE" id="PS01075">
    <property type="entry name" value="ACETATE_KINASE_1"/>
    <property type="match status" value="1"/>
</dbReference>
<dbReference type="PROSITE" id="PS01076">
    <property type="entry name" value="ACETATE_KINASE_2"/>
    <property type="match status" value="1"/>
</dbReference>
<accession>A5IKE7</accession>
<keyword id="KW-0067">ATP-binding</keyword>
<keyword id="KW-0963">Cytoplasm</keyword>
<keyword id="KW-0418">Kinase</keyword>
<keyword id="KW-0460">Magnesium</keyword>
<keyword id="KW-0479">Metal-binding</keyword>
<keyword id="KW-0547">Nucleotide-binding</keyword>
<keyword id="KW-0808">Transferase</keyword>
<gene>
    <name evidence="1" type="primary">ackA</name>
    <name type="ordered locus">Tpet_0650</name>
</gene>
<name>ACKA_THEP1</name>
<evidence type="ECO:0000255" key="1">
    <source>
        <dbReference type="HAMAP-Rule" id="MF_00020"/>
    </source>
</evidence>
<reference key="1">
    <citation type="submission" date="2007-05" db="EMBL/GenBank/DDBJ databases">
        <title>Complete sequence of Thermotoga petrophila RKU-1.</title>
        <authorList>
            <consortium name="US DOE Joint Genome Institute"/>
            <person name="Copeland A."/>
            <person name="Lucas S."/>
            <person name="Lapidus A."/>
            <person name="Barry K."/>
            <person name="Glavina del Rio T."/>
            <person name="Dalin E."/>
            <person name="Tice H."/>
            <person name="Pitluck S."/>
            <person name="Sims D."/>
            <person name="Brettin T."/>
            <person name="Bruce D."/>
            <person name="Detter J.C."/>
            <person name="Han C."/>
            <person name="Tapia R."/>
            <person name="Schmutz J."/>
            <person name="Larimer F."/>
            <person name="Land M."/>
            <person name="Hauser L."/>
            <person name="Kyrpides N."/>
            <person name="Mikhailova N."/>
            <person name="Nelson K."/>
            <person name="Gogarten J.P."/>
            <person name="Noll K."/>
            <person name="Richardson P."/>
        </authorList>
    </citation>
    <scope>NUCLEOTIDE SEQUENCE [LARGE SCALE GENOMIC DNA]</scope>
    <source>
        <strain>ATCC BAA-488 / DSM 13995 / JCM 10881 / RKU-1</strain>
    </source>
</reference>
<feature type="chain" id="PRO_1000002282" description="Acetate kinase">
    <location>
        <begin position="1"/>
        <end position="403"/>
    </location>
</feature>
<feature type="active site" description="Proton donor/acceptor" evidence="1">
    <location>
        <position position="147"/>
    </location>
</feature>
<feature type="binding site" evidence="1">
    <location>
        <position position="7"/>
    </location>
    <ligand>
        <name>Mg(2+)</name>
        <dbReference type="ChEBI" id="CHEBI:18420"/>
    </ligand>
</feature>
<feature type="binding site" evidence="1">
    <location>
        <position position="14"/>
    </location>
    <ligand>
        <name>ATP</name>
        <dbReference type="ChEBI" id="CHEBI:30616"/>
    </ligand>
</feature>
<feature type="binding site" evidence="1">
    <location>
        <position position="90"/>
    </location>
    <ligand>
        <name>substrate</name>
    </ligand>
</feature>
<feature type="binding site" evidence="1">
    <location>
        <begin position="207"/>
        <end position="211"/>
    </location>
    <ligand>
        <name>ATP</name>
        <dbReference type="ChEBI" id="CHEBI:30616"/>
    </ligand>
</feature>
<feature type="binding site" evidence="1">
    <location>
        <begin position="283"/>
        <end position="285"/>
    </location>
    <ligand>
        <name>ATP</name>
        <dbReference type="ChEBI" id="CHEBI:30616"/>
    </ligand>
</feature>
<feature type="binding site" evidence="1">
    <location>
        <begin position="331"/>
        <end position="335"/>
    </location>
    <ligand>
        <name>ATP</name>
        <dbReference type="ChEBI" id="CHEBI:30616"/>
    </ligand>
</feature>
<feature type="binding site" evidence="1">
    <location>
        <position position="386"/>
    </location>
    <ligand>
        <name>Mg(2+)</name>
        <dbReference type="ChEBI" id="CHEBI:18420"/>
    </ligand>
</feature>
<feature type="site" description="Transition state stabilizer" evidence="1">
    <location>
        <position position="179"/>
    </location>
</feature>
<feature type="site" description="Transition state stabilizer" evidence="1">
    <location>
        <position position="240"/>
    </location>
</feature>
<organism>
    <name type="scientific">Thermotoga petrophila (strain ATCC BAA-488 / DSM 13995 / JCM 10881 / RKU-1)</name>
    <dbReference type="NCBI Taxonomy" id="390874"/>
    <lineage>
        <taxon>Bacteria</taxon>
        <taxon>Thermotogati</taxon>
        <taxon>Thermotogota</taxon>
        <taxon>Thermotogae</taxon>
        <taxon>Thermotogales</taxon>
        <taxon>Thermotogaceae</taxon>
        <taxon>Thermotoga</taxon>
    </lineage>
</organism>
<proteinExistence type="inferred from homology"/>
<protein>
    <recommendedName>
        <fullName evidence="1">Acetate kinase</fullName>
        <ecNumber evidence="1">2.7.2.1</ecNumber>
    </recommendedName>
    <alternativeName>
        <fullName evidence="1">Acetokinase</fullName>
    </alternativeName>
</protein>